<comment type="catalytic activity">
    <reaction evidence="1">
        <text>(S)-malate + NAD(+) = pyruvate + CO2 + NADH</text>
        <dbReference type="Rhea" id="RHEA:12653"/>
        <dbReference type="ChEBI" id="CHEBI:15361"/>
        <dbReference type="ChEBI" id="CHEBI:15589"/>
        <dbReference type="ChEBI" id="CHEBI:16526"/>
        <dbReference type="ChEBI" id="CHEBI:57540"/>
        <dbReference type="ChEBI" id="CHEBI:57945"/>
        <dbReference type="EC" id="1.1.1.38"/>
    </reaction>
</comment>
<comment type="catalytic activity">
    <reaction evidence="1">
        <text>oxaloacetate + H(+) = pyruvate + CO2</text>
        <dbReference type="Rhea" id="RHEA:15641"/>
        <dbReference type="ChEBI" id="CHEBI:15361"/>
        <dbReference type="ChEBI" id="CHEBI:15378"/>
        <dbReference type="ChEBI" id="CHEBI:16452"/>
        <dbReference type="ChEBI" id="CHEBI:16526"/>
        <dbReference type="EC" id="1.1.1.38"/>
    </reaction>
</comment>
<comment type="cofactor">
    <cofactor evidence="1">
        <name>Mg(2+)</name>
        <dbReference type="ChEBI" id="CHEBI:18420"/>
    </cofactor>
    <cofactor evidence="1">
        <name>Mn(2+)</name>
        <dbReference type="ChEBI" id="CHEBI:29035"/>
    </cofactor>
    <text evidence="1">Divalent metal cations. Prefers magnesium or manganese.</text>
</comment>
<comment type="subunit">
    <text evidence="1">Homotetramer.</text>
</comment>
<comment type="similarity">
    <text evidence="1">Belongs to the malic enzymes family.</text>
</comment>
<organism>
    <name type="scientific">Klebsiella pneumoniae subsp. pneumoniae (strain ATCC 700721 / MGH 78578)</name>
    <dbReference type="NCBI Taxonomy" id="272620"/>
    <lineage>
        <taxon>Bacteria</taxon>
        <taxon>Pseudomonadati</taxon>
        <taxon>Pseudomonadota</taxon>
        <taxon>Gammaproteobacteria</taxon>
        <taxon>Enterobacterales</taxon>
        <taxon>Enterobacteriaceae</taxon>
        <taxon>Klebsiella/Raoultella group</taxon>
        <taxon>Klebsiella</taxon>
        <taxon>Klebsiella pneumoniae complex</taxon>
    </lineage>
</organism>
<reference key="1">
    <citation type="submission" date="2006-09" db="EMBL/GenBank/DDBJ databases">
        <authorList>
            <consortium name="The Klebsiella pneumonia Genome Sequencing Project"/>
            <person name="McClelland M."/>
            <person name="Sanderson E.K."/>
            <person name="Spieth J."/>
            <person name="Clifton W.S."/>
            <person name="Latreille P."/>
            <person name="Sabo A."/>
            <person name="Pepin K."/>
            <person name="Bhonagiri V."/>
            <person name="Porwollik S."/>
            <person name="Ali J."/>
            <person name="Wilson R.K."/>
        </authorList>
    </citation>
    <scope>NUCLEOTIDE SEQUENCE [LARGE SCALE GENOMIC DNA]</scope>
    <source>
        <strain>ATCC 700721 / MGH 78578</strain>
    </source>
</reference>
<name>MAO1_KLEP7</name>
<gene>
    <name evidence="1" type="primary">maeA</name>
    <name type="ordered locus">KPN78578_18170</name>
    <name type="ORF">KPN_01847</name>
</gene>
<sequence length="565" mass="62772">MQFTHKKNRSLYIPYAGPVLLEFPLLNKGSAFSMEERSNFNLLGLLPEVVETIEEQAERAWIQYQGFKTEIDKHIYLRNIQDTNETLFYRLIGNHLEEMMPVIYTPTVGAACERFSEIYRRARGVFISYQNRHNLDDILQNVPNHNVKVIVVTDGERILGLGDQGIGGMGIPIGKLSLYTTCGGISPAYTLPIVLDVGTNNQQLLDDPLYMGWRHPRITDDEYYQFVDDVIQAIKARWPDVLLQFEDFAQKNAMPLLNRYRNEICSFNDDIQGTAAVTVGTLIAASRGAGSQLSEQKIVFLGAGSAGCGIAEQIIAQIVREGLSEEEARQRVFMVDRFGLLTDGMPNLLPFQNKLVQKREQLQSWDTTSEALSLLDVVRNVKPNILIGVSGQPGLFTEEIIREMHKHCPRPIVMPLSNPTSRVEATPQNILSWTDGEALVATGSPFSPVTVKGKQYPIAQCNNSYIFPGIGLGVIASGASRVTDEMLMAASETLAQHSPLVNNGEGPVLPELKDIQTVSRAIAFAVGKVAQEQGVAVKTSAEALLQAISDNFWLPEYRNYRRTSI</sequence>
<proteinExistence type="inferred from homology"/>
<protein>
    <recommendedName>
        <fullName evidence="1">NAD-dependent malic enzyme</fullName>
        <shortName evidence="1">NAD-ME</shortName>
        <ecNumber evidence="1">1.1.1.38</ecNumber>
    </recommendedName>
</protein>
<dbReference type="EC" id="1.1.1.38" evidence="1"/>
<dbReference type="EMBL" id="CP000647">
    <property type="protein sequence ID" value="ABR77278.1"/>
    <property type="molecule type" value="Genomic_DNA"/>
</dbReference>
<dbReference type="RefSeq" id="WP_002906125.1">
    <property type="nucleotide sequence ID" value="NC_009648.1"/>
</dbReference>
<dbReference type="SMR" id="A6T9K7"/>
<dbReference type="STRING" id="272620.KPN_01847"/>
<dbReference type="jPOST" id="A6T9K7"/>
<dbReference type="PaxDb" id="272620-KPN_01847"/>
<dbReference type="EnsemblBacteria" id="ABR77278">
    <property type="protein sequence ID" value="ABR77278"/>
    <property type="gene ID" value="KPN_01847"/>
</dbReference>
<dbReference type="KEGG" id="kpn:KPN_01847"/>
<dbReference type="HOGENOM" id="CLU_011405_5_2_6"/>
<dbReference type="Proteomes" id="UP000000265">
    <property type="component" value="Chromosome"/>
</dbReference>
<dbReference type="GO" id="GO:0005829">
    <property type="term" value="C:cytosol"/>
    <property type="evidence" value="ECO:0007669"/>
    <property type="project" value="TreeGrafter"/>
</dbReference>
<dbReference type="GO" id="GO:0004471">
    <property type="term" value="F:malate dehydrogenase (decarboxylating) (NAD+) activity"/>
    <property type="evidence" value="ECO:0007669"/>
    <property type="project" value="UniProtKB-UniRule"/>
</dbReference>
<dbReference type="GO" id="GO:0046872">
    <property type="term" value="F:metal ion binding"/>
    <property type="evidence" value="ECO:0007669"/>
    <property type="project" value="UniProtKB-KW"/>
</dbReference>
<dbReference type="GO" id="GO:0051287">
    <property type="term" value="F:NAD binding"/>
    <property type="evidence" value="ECO:0007669"/>
    <property type="project" value="InterPro"/>
</dbReference>
<dbReference type="GO" id="GO:0008948">
    <property type="term" value="F:oxaloacetate decarboxylase activity"/>
    <property type="evidence" value="ECO:0007669"/>
    <property type="project" value="UniProtKB-UniRule"/>
</dbReference>
<dbReference type="GO" id="GO:0006108">
    <property type="term" value="P:malate metabolic process"/>
    <property type="evidence" value="ECO:0007669"/>
    <property type="project" value="TreeGrafter"/>
</dbReference>
<dbReference type="CDD" id="cd05312">
    <property type="entry name" value="NAD_bind_1_malic_enz"/>
    <property type="match status" value="1"/>
</dbReference>
<dbReference type="FunFam" id="3.40.50.10380:FF:000001">
    <property type="entry name" value="NAD-dependent malic enzyme"/>
    <property type="match status" value="1"/>
</dbReference>
<dbReference type="FunFam" id="3.40.50.720:FF:000055">
    <property type="entry name" value="NAD-dependent malic enzyme"/>
    <property type="match status" value="1"/>
</dbReference>
<dbReference type="Gene3D" id="3.40.50.10380">
    <property type="entry name" value="Malic enzyme, N-terminal domain"/>
    <property type="match status" value="1"/>
</dbReference>
<dbReference type="Gene3D" id="3.40.50.720">
    <property type="entry name" value="NAD(P)-binding Rossmann-like Domain"/>
    <property type="match status" value="1"/>
</dbReference>
<dbReference type="HAMAP" id="MF_01619">
    <property type="entry name" value="NAD_malic_enz"/>
    <property type="match status" value="1"/>
</dbReference>
<dbReference type="InterPro" id="IPR046346">
    <property type="entry name" value="Aminoacid_DH-like_N_sf"/>
</dbReference>
<dbReference type="InterPro" id="IPR015884">
    <property type="entry name" value="Malic_enzyme_CS"/>
</dbReference>
<dbReference type="InterPro" id="IPR012301">
    <property type="entry name" value="Malic_N_dom"/>
</dbReference>
<dbReference type="InterPro" id="IPR037062">
    <property type="entry name" value="Malic_N_dom_sf"/>
</dbReference>
<dbReference type="InterPro" id="IPR012302">
    <property type="entry name" value="Malic_NAD-bd"/>
</dbReference>
<dbReference type="InterPro" id="IPR001891">
    <property type="entry name" value="Malic_OxRdtase"/>
</dbReference>
<dbReference type="InterPro" id="IPR036291">
    <property type="entry name" value="NAD(P)-bd_dom_sf"/>
</dbReference>
<dbReference type="InterPro" id="IPR023667">
    <property type="entry name" value="NAD_malic_enz_proteobac"/>
</dbReference>
<dbReference type="NCBIfam" id="NF010052">
    <property type="entry name" value="PRK13529.1"/>
    <property type="match status" value="1"/>
</dbReference>
<dbReference type="PANTHER" id="PTHR23406">
    <property type="entry name" value="MALIC ENZYME-RELATED"/>
    <property type="match status" value="1"/>
</dbReference>
<dbReference type="PANTHER" id="PTHR23406:SF34">
    <property type="entry name" value="NAD-DEPENDENT MALIC ENZYME, MITOCHONDRIAL"/>
    <property type="match status" value="1"/>
</dbReference>
<dbReference type="Pfam" id="PF00390">
    <property type="entry name" value="malic"/>
    <property type="match status" value="1"/>
</dbReference>
<dbReference type="Pfam" id="PF03949">
    <property type="entry name" value="Malic_M"/>
    <property type="match status" value="1"/>
</dbReference>
<dbReference type="PIRSF" id="PIRSF000106">
    <property type="entry name" value="ME"/>
    <property type="match status" value="1"/>
</dbReference>
<dbReference type="PRINTS" id="PR00072">
    <property type="entry name" value="MALOXRDTASE"/>
</dbReference>
<dbReference type="SMART" id="SM01274">
    <property type="entry name" value="malic"/>
    <property type="match status" value="1"/>
</dbReference>
<dbReference type="SMART" id="SM00919">
    <property type="entry name" value="Malic_M"/>
    <property type="match status" value="1"/>
</dbReference>
<dbReference type="SUPFAM" id="SSF53223">
    <property type="entry name" value="Aminoacid dehydrogenase-like, N-terminal domain"/>
    <property type="match status" value="1"/>
</dbReference>
<dbReference type="SUPFAM" id="SSF51735">
    <property type="entry name" value="NAD(P)-binding Rossmann-fold domains"/>
    <property type="match status" value="1"/>
</dbReference>
<dbReference type="PROSITE" id="PS00331">
    <property type="entry name" value="MALIC_ENZYMES"/>
    <property type="match status" value="1"/>
</dbReference>
<accession>A6T9K7</accession>
<evidence type="ECO:0000255" key="1">
    <source>
        <dbReference type="HAMAP-Rule" id="MF_01619"/>
    </source>
</evidence>
<feature type="chain" id="PRO_1000069532" description="NAD-dependent malic enzyme">
    <location>
        <begin position="1"/>
        <end position="565"/>
    </location>
</feature>
<feature type="active site" description="Proton donor" evidence="1">
    <location>
        <position position="104"/>
    </location>
</feature>
<feature type="active site" description="Proton acceptor" evidence="1">
    <location>
        <position position="175"/>
    </location>
</feature>
<feature type="binding site" evidence="1">
    <location>
        <position position="157"/>
    </location>
    <ligand>
        <name>NAD(+)</name>
        <dbReference type="ChEBI" id="CHEBI:57540"/>
    </ligand>
</feature>
<feature type="binding site" evidence="1">
    <location>
        <position position="246"/>
    </location>
    <ligand>
        <name>a divalent metal cation</name>
        <dbReference type="ChEBI" id="CHEBI:60240"/>
    </ligand>
</feature>
<feature type="binding site" evidence="1">
    <location>
        <position position="247"/>
    </location>
    <ligand>
        <name>a divalent metal cation</name>
        <dbReference type="ChEBI" id="CHEBI:60240"/>
    </ligand>
</feature>
<feature type="binding site" evidence="1">
    <location>
        <position position="270"/>
    </location>
    <ligand>
        <name>a divalent metal cation</name>
        <dbReference type="ChEBI" id="CHEBI:60240"/>
    </ligand>
</feature>
<feature type="binding site" evidence="1">
    <location>
        <position position="270"/>
    </location>
    <ligand>
        <name>NAD(+)</name>
        <dbReference type="ChEBI" id="CHEBI:57540"/>
    </ligand>
</feature>
<feature type="binding site" evidence="1">
    <location>
        <position position="418"/>
    </location>
    <ligand>
        <name>NAD(+)</name>
        <dbReference type="ChEBI" id="CHEBI:57540"/>
    </ligand>
</feature>
<feature type="site" description="Important for activity" evidence="1">
    <location>
        <position position="270"/>
    </location>
</feature>
<keyword id="KW-0479">Metal-binding</keyword>
<keyword id="KW-0520">NAD</keyword>
<keyword id="KW-0560">Oxidoreductase</keyword>